<gene>
    <name type="primary">Rad51b</name>
    <name type="synonym">Rad51l1</name>
    <name type="synonym">Rec2</name>
</gene>
<accession>O35719</accession>
<accession>Q8BSH6</accession>
<accession>Q9D555</accession>
<feature type="chain" id="PRO_0000122940" description="DNA repair protein RAD51 homolog 2">
    <location>
        <begin position="1"/>
        <end position="350"/>
    </location>
</feature>
<feature type="region of interest" description="Interaction with RAD51C" evidence="1">
    <location>
        <begin position="1"/>
        <end position="75"/>
    </location>
</feature>
<feature type="binding site" evidence="3">
    <location>
        <begin position="108"/>
        <end position="115"/>
    </location>
    <ligand>
        <name>ATP</name>
        <dbReference type="ChEBI" id="CHEBI:30616"/>
    </ligand>
</feature>
<feature type="splice variant" id="VSP_008869" description="In isoform 2." evidence="5">
    <original>ILTNQ</original>
    <variation>TFQPI</variation>
    <location>
        <begin position="254"/>
        <end position="258"/>
    </location>
</feature>
<feature type="splice variant" id="VSP_008870" description="In isoform 2." evidence="5">
    <location>
        <begin position="259"/>
        <end position="350"/>
    </location>
</feature>
<feature type="sequence conflict" description="In Ref. 1; AAB63359." evidence="6" ref="1">
    <original>Q</original>
    <variation>L</variation>
    <location>
        <position position="23"/>
    </location>
</feature>
<proteinExistence type="evidence at transcript level"/>
<keyword id="KW-0025">Alternative splicing</keyword>
<keyword id="KW-0067">ATP-binding</keyword>
<keyword id="KW-0227">DNA damage</keyword>
<keyword id="KW-0233">DNA recombination</keyword>
<keyword id="KW-0234">DNA repair</keyword>
<keyword id="KW-0238">DNA-binding</keyword>
<keyword id="KW-0547">Nucleotide-binding</keyword>
<keyword id="KW-0539">Nucleus</keyword>
<keyword id="KW-1185">Reference proteome</keyword>
<evidence type="ECO:0000250" key="1"/>
<evidence type="ECO:0000250" key="2">
    <source>
        <dbReference type="UniProtKB" id="O15315"/>
    </source>
</evidence>
<evidence type="ECO:0000255" key="3"/>
<evidence type="ECO:0000269" key="4">
    <source>
    </source>
</evidence>
<evidence type="ECO:0000303" key="5">
    <source>
    </source>
</evidence>
<evidence type="ECO:0000305" key="6"/>
<comment type="function">
    <text evidence="2">Involved in the homologous recombination repair (HRR) pathway of double-stranded DNA breaks arising during DNA replication or induced by DNA-damaging agents. May promote the assembly of presynaptic RAD51 nucleoprotein filaments. Binds single-stranded DNA and double-stranded DNA and has DNA-dependent ATPase activity. Part of the RAD51 paralog protein complex BCDX2 which acts in the BRCA1-BRCA2-dependent HR pathway. Upon DNA damage, BCDX2 acts downstream of BRCA2 recruitment and upstream of RAD51 recruitment. BCDX2 binds predominantly to the intersection of the four duplex arms of the Holliday junction and to junction of replication forks. The BCDX2 complex was originally reported to bind single-stranded DNA, single-stranded gaps in duplex DNA and specifically to nicks in duplex DNA. The BCDX2 subcomplex RAD51B:RAD51C exhibits single-stranded DNA-dependent ATPase activity suggesting an involvement in early stages of the HR pathway.</text>
</comment>
<comment type="subunit">
    <text evidence="2">Part of the BCDX2 complex consisting of RAD51B, RAD51C, RAD51D and XRCC2; the complex has a ring-like structure arranged into a flat disc around a central channel. The BCDX2 subcomplex RAD51B:RAD51C interacts with RAD51. Interacts with SWSAP1; involved in homologous recombination repair. Interacts with HELQ.</text>
</comment>
<comment type="subcellular location">
    <subcellularLocation>
        <location evidence="2">Nucleus</location>
    </subcellularLocation>
</comment>
<comment type="alternative products">
    <event type="alternative splicing"/>
    <isoform>
        <id>O35719-1</id>
        <name>1</name>
        <sequence type="displayed"/>
    </isoform>
    <isoform>
        <id>O35719-2</id>
        <name>2</name>
        <sequence type="described" ref="VSP_008869 VSP_008870"/>
    </isoform>
</comment>
<comment type="tissue specificity">
    <text evidence="4">Expressed in a wide range of tissues.</text>
</comment>
<comment type="PTM">
    <text evidence="2">Phosphorylated on tyrosine residues by BCR-ABL.</text>
</comment>
<comment type="similarity">
    <text evidence="6">Belongs to the RecA family. RAD51 subfamily.</text>
</comment>
<sequence length="350" mass="38152">MSSKKLRRVGLSPELCDRLSRYQIVNCQHFLSLSPLELMKVTGLSYRGVHELLHTVSKACAPQMQTAYELKTRRSAHLSPAFLSTTLCALDEALHGGVPCGSLTEITGPPGCGKTQFCIMMSVLATLPTSLGGLEGAVVYIDTESAFTAERLVEIAESRFPQYFNTEEKLLLTSSRVHLCRELTCEGLLQRLESLEEEIISKGVKLVIVDSIASVVRKEFDPKLQGNIKERNKFLGKGASLLKYLAGEFSIPVILTNQITTHLSGALPSQADLVSPADDLSLSEGTSGSSCLVAALGNTWGHCVNTRLILQYLDSERRQILIAKSPLAAFTSFVYTIKGEGLVLQGHERP</sequence>
<protein>
    <recommendedName>
        <fullName>DNA repair protein RAD51 homolog 2</fullName>
        <shortName>R51H2</shortName>
    </recommendedName>
    <alternativeName>
        <fullName>RAD51 homolog B</fullName>
    </alternativeName>
    <alternativeName>
        <fullName>RAD51-like protein 1</fullName>
    </alternativeName>
</protein>
<reference key="1">
    <citation type="journal article" date="1997" name="Proc. Natl. Acad. Sci. U.S.A.">
        <title>Isolation of human and mouse genes based on homology to REC2, a recombinational repair gene from the fungus Ustilago maydis.</title>
        <authorList>
            <person name="Rice M.C."/>
            <person name="Smith S.T."/>
            <person name="Bullrich F."/>
            <person name="Havre P."/>
            <person name="Kmiec E.B."/>
        </authorList>
    </citation>
    <scope>NUCLEOTIDE SEQUENCE [MRNA] (ISOFORM 1)</scope>
    <scope>TISSUE SPECIFICITY</scope>
</reference>
<reference key="2">
    <citation type="journal article" date="2005" name="Science">
        <title>The transcriptional landscape of the mammalian genome.</title>
        <authorList>
            <person name="Carninci P."/>
            <person name="Kasukawa T."/>
            <person name="Katayama S."/>
            <person name="Gough J."/>
            <person name="Frith M.C."/>
            <person name="Maeda N."/>
            <person name="Oyama R."/>
            <person name="Ravasi T."/>
            <person name="Lenhard B."/>
            <person name="Wells C."/>
            <person name="Kodzius R."/>
            <person name="Shimokawa K."/>
            <person name="Bajic V.B."/>
            <person name="Brenner S.E."/>
            <person name="Batalov S."/>
            <person name="Forrest A.R."/>
            <person name="Zavolan M."/>
            <person name="Davis M.J."/>
            <person name="Wilming L.G."/>
            <person name="Aidinis V."/>
            <person name="Allen J.E."/>
            <person name="Ambesi-Impiombato A."/>
            <person name="Apweiler R."/>
            <person name="Aturaliya R.N."/>
            <person name="Bailey T.L."/>
            <person name="Bansal M."/>
            <person name="Baxter L."/>
            <person name="Beisel K.W."/>
            <person name="Bersano T."/>
            <person name="Bono H."/>
            <person name="Chalk A.M."/>
            <person name="Chiu K.P."/>
            <person name="Choudhary V."/>
            <person name="Christoffels A."/>
            <person name="Clutterbuck D.R."/>
            <person name="Crowe M.L."/>
            <person name="Dalla E."/>
            <person name="Dalrymple B.P."/>
            <person name="de Bono B."/>
            <person name="Della Gatta G."/>
            <person name="di Bernardo D."/>
            <person name="Down T."/>
            <person name="Engstrom P."/>
            <person name="Fagiolini M."/>
            <person name="Faulkner G."/>
            <person name="Fletcher C.F."/>
            <person name="Fukushima T."/>
            <person name="Furuno M."/>
            <person name="Futaki S."/>
            <person name="Gariboldi M."/>
            <person name="Georgii-Hemming P."/>
            <person name="Gingeras T.R."/>
            <person name="Gojobori T."/>
            <person name="Green R.E."/>
            <person name="Gustincich S."/>
            <person name="Harbers M."/>
            <person name="Hayashi Y."/>
            <person name="Hensch T.K."/>
            <person name="Hirokawa N."/>
            <person name="Hill D."/>
            <person name="Huminiecki L."/>
            <person name="Iacono M."/>
            <person name="Ikeo K."/>
            <person name="Iwama A."/>
            <person name="Ishikawa T."/>
            <person name="Jakt M."/>
            <person name="Kanapin A."/>
            <person name="Katoh M."/>
            <person name="Kawasawa Y."/>
            <person name="Kelso J."/>
            <person name="Kitamura H."/>
            <person name="Kitano H."/>
            <person name="Kollias G."/>
            <person name="Krishnan S.P."/>
            <person name="Kruger A."/>
            <person name="Kummerfeld S.K."/>
            <person name="Kurochkin I.V."/>
            <person name="Lareau L.F."/>
            <person name="Lazarevic D."/>
            <person name="Lipovich L."/>
            <person name="Liu J."/>
            <person name="Liuni S."/>
            <person name="McWilliam S."/>
            <person name="Madan Babu M."/>
            <person name="Madera M."/>
            <person name="Marchionni L."/>
            <person name="Matsuda H."/>
            <person name="Matsuzawa S."/>
            <person name="Miki H."/>
            <person name="Mignone F."/>
            <person name="Miyake S."/>
            <person name="Morris K."/>
            <person name="Mottagui-Tabar S."/>
            <person name="Mulder N."/>
            <person name="Nakano N."/>
            <person name="Nakauchi H."/>
            <person name="Ng P."/>
            <person name="Nilsson R."/>
            <person name="Nishiguchi S."/>
            <person name="Nishikawa S."/>
            <person name="Nori F."/>
            <person name="Ohara O."/>
            <person name="Okazaki Y."/>
            <person name="Orlando V."/>
            <person name="Pang K.C."/>
            <person name="Pavan W.J."/>
            <person name="Pavesi G."/>
            <person name="Pesole G."/>
            <person name="Petrovsky N."/>
            <person name="Piazza S."/>
            <person name="Reed J."/>
            <person name="Reid J.F."/>
            <person name="Ring B.Z."/>
            <person name="Ringwald M."/>
            <person name="Rost B."/>
            <person name="Ruan Y."/>
            <person name="Salzberg S.L."/>
            <person name="Sandelin A."/>
            <person name="Schneider C."/>
            <person name="Schoenbach C."/>
            <person name="Sekiguchi K."/>
            <person name="Semple C.A."/>
            <person name="Seno S."/>
            <person name="Sessa L."/>
            <person name="Sheng Y."/>
            <person name="Shibata Y."/>
            <person name="Shimada H."/>
            <person name="Shimada K."/>
            <person name="Silva D."/>
            <person name="Sinclair B."/>
            <person name="Sperling S."/>
            <person name="Stupka E."/>
            <person name="Sugiura K."/>
            <person name="Sultana R."/>
            <person name="Takenaka Y."/>
            <person name="Taki K."/>
            <person name="Tammoja K."/>
            <person name="Tan S.L."/>
            <person name="Tang S."/>
            <person name="Taylor M.S."/>
            <person name="Tegner J."/>
            <person name="Teichmann S.A."/>
            <person name="Ueda H.R."/>
            <person name="van Nimwegen E."/>
            <person name="Verardo R."/>
            <person name="Wei C.L."/>
            <person name="Yagi K."/>
            <person name="Yamanishi H."/>
            <person name="Zabarovsky E."/>
            <person name="Zhu S."/>
            <person name="Zimmer A."/>
            <person name="Hide W."/>
            <person name="Bult C."/>
            <person name="Grimmond S.M."/>
            <person name="Teasdale R.D."/>
            <person name="Liu E.T."/>
            <person name="Brusic V."/>
            <person name="Quackenbush J."/>
            <person name="Wahlestedt C."/>
            <person name="Mattick J.S."/>
            <person name="Hume D.A."/>
            <person name="Kai C."/>
            <person name="Sasaki D."/>
            <person name="Tomaru Y."/>
            <person name="Fukuda S."/>
            <person name="Kanamori-Katayama M."/>
            <person name="Suzuki M."/>
            <person name="Aoki J."/>
            <person name="Arakawa T."/>
            <person name="Iida J."/>
            <person name="Imamura K."/>
            <person name="Itoh M."/>
            <person name="Kato T."/>
            <person name="Kawaji H."/>
            <person name="Kawagashira N."/>
            <person name="Kawashima T."/>
            <person name="Kojima M."/>
            <person name="Kondo S."/>
            <person name="Konno H."/>
            <person name="Nakano K."/>
            <person name="Ninomiya N."/>
            <person name="Nishio T."/>
            <person name="Okada M."/>
            <person name="Plessy C."/>
            <person name="Shibata K."/>
            <person name="Shiraki T."/>
            <person name="Suzuki S."/>
            <person name="Tagami M."/>
            <person name="Waki K."/>
            <person name="Watahiki A."/>
            <person name="Okamura-Oho Y."/>
            <person name="Suzuki H."/>
            <person name="Kawai J."/>
            <person name="Hayashizaki Y."/>
        </authorList>
    </citation>
    <scope>NUCLEOTIDE SEQUENCE [LARGE SCALE MRNA] (ISOFORMS 1 AND 2)</scope>
    <source>
        <strain>C57BL/6J</strain>
        <tissue>Mesonephros</tissue>
    </source>
</reference>
<organism>
    <name type="scientific">Mus musculus</name>
    <name type="common">Mouse</name>
    <dbReference type="NCBI Taxonomy" id="10090"/>
    <lineage>
        <taxon>Eukaryota</taxon>
        <taxon>Metazoa</taxon>
        <taxon>Chordata</taxon>
        <taxon>Craniata</taxon>
        <taxon>Vertebrata</taxon>
        <taxon>Euteleostomi</taxon>
        <taxon>Mammalia</taxon>
        <taxon>Eutheria</taxon>
        <taxon>Euarchontoglires</taxon>
        <taxon>Glires</taxon>
        <taxon>Rodentia</taxon>
        <taxon>Myomorpha</taxon>
        <taxon>Muroidea</taxon>
        <taxon>Muridae</taxon>
        <taxon>Murinae</taxon>
        <taxon>Mus</taxon>
        <taxon>Mus</taxon>
    </lineage>
</organism>
<dbReference type="EMBL" id="U92068">
    <property type="protein sequence ID" value="AAB63359.1"/>
    <property type="molecule type" value="mRNA"/>
</dbReference>
<dbReference type="EMBL" id="AK015771">
    <property type="protein sequence ID" value="BAB29970.1"/>
    <property type="molecule type" value="mRNA"/>
</dbReference>
<dbReference type="EMBL" id="AK032913">
    <property type="protein sequence ID" value="BAC28084.1"/>
    <property type="molecule type" value="mRNA"/>
</dbReference>
<dbReference type="CCDS" id="CCDS56845.1">
    <molecule id="O35719-2"/>
</dbReference>
<dbReference type="CCDS" id="CCDS88360.1">
    <molecule id="O35719-1"/>
</dbReference>
<dbReference type="RefSeq" id="NP_001239491.1">
    <molecule id="O35719-2"/>
    <property type="nucleotide sequence ID" value="NM_001252562.1"/>
</dbReference>
<dbReference type="RefSeq" id="NP_001410043.1">
    <molecule id="O35719-1"/>
    <property type="nucleotide sequence ID" value="NM_001423114.1"/>
</dbReference>
<dbReference type="RefSeq" id="NP_001410044.1">
    <molecule id="O35719-1"/>
    <property type="nucleotide sequence ID" value="NM_001423115.1"/>
</dbReference>
<dbReference type="RefSeq" id="NP_033040.2">
    <molecule id="O35719-1"/>
    <property type="nucleotide sequence ID" value="NM_009014.3"/>
</dbReference>
<dbReference type="RefSeq" id="XP_011242347.1">
    <property type="nucleotide sequence ID" value="XM_011244045.1"/>
</dbReference>
<dbReference type="RefSeq" id="XP_036013162.1">
    <molecule id="O35719-1"/>
    <property type="nucleotide sequence ID" value="XM_036157269.1"/>
</dbReference>
<dbReference type="SMR" id="O35719"/>
<dbReference type="BioGRID" id="202566">
    <property type="interactions" value="6"/>
</dbReference>
<dbReference type="FunCoup" id="O35719">
    <property type="interactions" value="140"/>
</dbReference>
<dbReference type="STRING" id="10090.ENSMUSP00000078490"/>
<dbReference type="PhosphoSitePlus" id="O35719"/>
<dbReference type="jPOST" id="O35719"/>
<dbReference type="PaxDb" id="10090-ENSMUSP00000078490"/>
<dbReference type="PeptideAtlas" id="O35719"/>
<dbReference type="ProteomicsDB" id="300285">
    <molecule id="O35719-1"/>
</dbReference>
<dbReference type="ProteomicsDB" id="300286">
    <molecule id="O35719-2"/>
</dbReference>
<dbReference type="Pumba" id="O35719"/>
<dbReference type="Antibodypedia" id="4257">
    <property type="antibodies" value="299 antibodies from 36 providers"/>
</dbReference>
<dbReference type="DNASU" id="19363"/>
<dbReference type="Ensembl" id="ENSMUST00000079533.12">
    <molecule id="O35719-2"/>
    <property type="protein sequence ID" value="ENSMUSP00000078490.6"/>
    <property type="gene ID" value="ENSMUSG00000059060.16"/>
</dbReference>
<dbReference type="Ensembl" id="ENSMUST00000171210.3">
    <molecule id="O35719-1"/>
    <property type="protein sequence ID" value="ENSMUSP00000128357.3"/>
    <property type="gene ID" value="ENSMUSG00000059060.16"/>
</dbReference>
<dbReference type="Ensembl" id="ENSMUST00000218039.3">
    <molecule id="O35719-1"/>
    <property type="protein sequence ID" value="ENSMUSP00000152105.2"/>
    <property type="gene ID" value="ENSMUSG00000059060.16"/>
</dbReference>
<dbReference type="GeneID" id="19363"/>
<dbReference type="KEGG" id="mmu:19363"/>
<dbReference type="UCSC" id="uc007oai.1">
    <molecule id="O35719-1"/>
    <property type="organism name" value="mouse"/>
</dbReference>
<dbReference type="UCSC" id="uc007oaj.1">
    <molecule id="O35719-2"/>
    <property type="organism name" value="mouse"/>
</dbReference>
<dbReference type="AGR" id="MGI:1099436"/>
<dbReference type="CTD" id="5890"/>
<dbReference type="MGI" id="MGI:1099436">
    <property type="gene designation" value="Rad51b"/>
</dbReference>
<dbReference type="VEuPathDB" id="HostDB:ENSMUSG00000059060"/>
<dbReference type="eggNOG" id="KOG1433">
    <property type="taxonomic scope" value="Eukaryota"/>
</dbReference>
<dbReference type="GeneTree" id="ENSGT00940000160169"/>
<dbReference type="InParanoid" id="O35719"/>
<dbReference type="OMA" id="IHCQGHN"/>
<dbReference type="OrthoDB" id="5957327at2759"/>
<dbReference type="PhylomeDB" id="O35719"/>
<dbReference type="TreeFam" id="TF101219"/>
<dbReference type="Reactome" id="R-MMU-5685942">
    <property type="pathway name" value="HDR through Homologous Recombination (HRR)"/>
</dbReference>
<dbReference type="Reactome" id="R-MMU-5693568">
    <property type="pathway name" value="Resolution of D-loop Structures through Holliday Junction Intermediates"/>
</dbReference>
<dbReference type="Reactome" id="R-MMU-5693579">
    <property type="pathway name" value="Homologous DNA Pairing and Strand Exchange"/>
</dbReference>
<dbReference type="Reactome" id="R-MMU-5693616">
    <property type="pathway name" value="Presynaptic phase of homologous DNA pairing and strand exchange"/>
</dbReference>
<dbReference type="Reactome" id="R-MMU-983231">
    <property type="pathway name" value="Factors involved in megakaryocyte development and platelet production"/>
</dbReference>
<dbReference type="BioGRID-ORCS" id="19363">
    <property type="hits" value="4 hits in 114 CRISPR screens"/>
</dbReference>
<dbReference type="ChiTaRS" id="Rad51b">
    <property type="organism name" value="mouse"/>
</dbReference>
<dbReference type="PRO" id="PR:O35719"/>
<dbReference type="Proteomes" id="UP000000589">
    <property type="component" value="Chromosome 12"/>
</dbReference>
<dbReference type="RNAct" id="O35719">
    <property type="molecule type" value="protein"/>
</dbReference>
<dbReference type="Bgee" id="ENSMUSG00000059060">
    <property type="expression patterns" value="Expressed in embryonic cell in blastocyst and 100 other cell types or tissues"/>
</dbReference>
<dbReference type="GO" id="GO:0033063">
    <property type="term" value="C:Rad51B-Rad51C-Rad51D-XRCC2 complex"/>
    <property type="evidence" value="ECO:0000250"/>
    <property type="project" value="UniProtKB"/>
</dbReference>
<dbReference type="GO" id="GO:0005657">
    <property type="term" value="C:replication fork"/>
    <property type="evidence" value="ECO:0000250"/>
    <property type="project" value="UniProtKB"/>
</dbReference>
<dbReference type="GO" id="GO:0005524">
    <property type="term" value="F:ATP binding"/>
    <property type="evidence" value="ECO:0007669"/>
    <property type="project" value="UniProtKB-KW"/>
</dbReference>
<dbReference type="GO" id="GO:0016887">
    <property type="term" value="F:ATP hydrolysis activity"/>
    <property type="evidence" value="ECO:0007669"/>
    <property type="project" value="InterPro"/>
</dbReference>
<dbReference type="GO" id="GO:0140664">
    <property type="term" value="F:ATP-dependent DNA damage sensor activity"/>
    <property type="evidence" value="ECO:0007669"/>
    <property type="project" value="InterPro"/>
</dbReference>
<dbReference type="GO" id="GO:0003690">
    <property type="term" value="F:double-stranded DNA binding"/>
    <property type="evidence" value="ECO:0000250"/>
    <property type="project" value="UniProtKB"/>
</dbReference>
<dbReference type="GO" id="GO:0000400">
    <property type="term" value="F:four-way junction DNA binding"/>
    <property type="evidence" value="ECO:0007669"/>
    <property type="project" value="Ensembl"/>
</dbReference>
<dbReference type="GO" id="GO:0003697">
    <property type="term" value="F:single-stranded DNA binding"/>
    <property type="evidence" value="ECO:0000250"/>
    <property type="project" value="UniProtKB"/>
</dbReference>
<dbReference type="GO" id="GO:0001832">
    <property type="term" value="P:blastocyst growth"/>
    <property type="evidence" value="ECO:0000315"/>
    <property type="project" value="MGI"/>
</dbReference>
<dbReference type="GO" id="GO:0000724">
    <property type="term" value="P:double-strand break repair via homologous recombination"/>
    <property type="evidence" value="ECO:0000250"/>
    <property type="project" value="UniProtKB"/>
</dbReference>
<dbReference type="GO" id="GO:0001701">
    <property type="term" value="P:in utero embryonic development"/>
    <property type="evidence" value="ECO:0000315"/>
    <property type="project" value="MGI"/>
</dbReference>
<dbReference type="GO" id="GO:0008284">
    <property type="term" value="P:positive regulation of cell population proliferation"/>
    <property type="evidence" value="ECO:0000315"/>
    <property type="project" value="MGI"/>
</dbReference>
<dbReference type="GO" id="GO:0010971">
    <property type="term" value="P:positive regulation of G2/M transition of mitotic cell cycle"/>
    <property type="evidence" value="ECO:0000250"/>
    <property type="project" value="UniProtKB"/>
</dbReference>
<dbReference type="GO" id="GO:0061053">
    <property type="term" value="P:somite development"/>
    <property type="evidence" value="ECO:0000315"/>
    <property type="project" value="MGI"/>
</dbReference>
<dbReference type="CDD" id="cd19493">
    <property type="entry name" value="Rad51B"/>
    <property type="match status" value="1"/>
</dbReference>
<dbReference type="FunFam" id="3.40.50.300:FF:000806">
    <property type="entry name" value="DNA repair protein RAD51 homolog 2"/>
    <property type="match status" value="1"/>
</dbReference>
<dbReference type="Gene3D" id="3.40.50.300">
    <property type="entry name" value="P-loop containing nucleotide triphosphate hydrolases"/>
    <property type="match status" value="1"/>
</dbReference>
<dbReference type="InterPro" id="IPR003593">
    <property type="entry name" value="AAA+_ATPase"/>
</dbReference>
<dbReference type="InterPro" id="IPR013632">
    <property type="entry name" value="DNA_recomb/repair_Rad51_C"/>
</dbReference>
<dbReference type="InterPro" id="IPR016467">
    <property type="entry name" value="DNA_recomb/repair_RecA-like"/>
</dbReference>
<dbReference type="InterPro" id="IPR027417">
    <property type="entry name" value="P-loop_NTPase"/>
</dbReference>
<dbReference type="InterPro" id="IPR030548">
    <property type="entry name" value="RAD51B"/>
</dbReference>
<dbReference type="InterPro" id="IPR020588">
    <property type="entry name" value="RecA_ATP-bd"/>
</dbReference>
<dbReference type="PANTHER" id="PTHR46456">
    <property type="entry name" value="DNA REPAIR PROTEIN RAD51 HOMOLOG 2"/>
    <property type="match status" value="1"/>
</dbReference>
<dbReference type="PANTHER" id="PTHR46456:SF1">
    <property type="entry name" value="DNA REPAIR PROTEIN RAD51 HOMOLOG 2"/>
    <property type="match status" value="1"/>
</dbReference>
<dbReference type="Pfam" id="PF08423">
    <property type="entry name" value="Rad51"/>
    <property type="match status" value="1"/>
</dbReference>
<dbReference type="PIRSF" id="PIRSF005856">
    <property type="entry name" value="Rad51"/>
    <property type="match status" value="1"/>
</dbReference>
<dbReference type="SMART" id="SM00382">
    <property type="entry name" value="AAA"/>
    <property type="match status" value="1"/>
</dbReference>
<dbReference type="SUPFAM" id="SSF52540">
    <property type="entry name" value="P-loop containing nucleoside triphosphate hydrolases"/>
    <property type="match status" value="1"/>
</dbReference>
<dbReference type="PROSITE" id="PS50162">
    <property type="entry name" value="RECA_2"/>
    <property type="match status" value="1"/>
</dbReference>
<name>RA51B_MOUSE</name>